<protein>
    <recommendedName>
        <fullName>Germin-like protein 1-1</fullName>
    </recommendedName>
    <alternativeName>
        <fullName>Germin-like protein 4</fullName>
        <shortName>OsGER4</shortName>
    </alternativeName>
</protein>
<feature type="signal peptide" evidence="2">
    <location>
        <begin position="1"/>
        <end position="24"/>
    </location>
</feature>
<feature type="chain" id="PRO_0000365494" description="Germin-like protein 1-1">
    <location>
        <begin position="25"/>
        <end position="216"/>
    </location>
</feature>
<feature type="domain" description="Cupin type-1" evidence="2">
    <location>
        <begin position="61"/>
        <end position="209"/>
    </location>
</feature>
<feature type="binding site" evidence="1">
    <location>
        <position position="109"/>
    </location>
    <ligand>
        <name>Mn(2+)</name>
        <dbReference type="ChEBI" id="CHEBI:29035"/>
    </ligand>
</feature>
<feature type="binding site" evidence="1">
    <location>
        <position position="111"/>
    </location>
    <ligand>
        <name>Mn(2+)</name>
        <dbReference type="ChEBI" id="CHEBI:29035"/>
    </ligand>
</feature>
<feature type="binding site" evidence="1">
    <location>
        <position position="116"/>
    </location>
    <ligand>
        <name>Mn(2+)</name>
        <dbReference type="ChEBI" id="CHEBI:29035"/>
    </ligand>
</feature>
<feature type="binding site" evidence="1">
    <location>
        <position position="155"/>
    </location>
    <ligand>
        <name>Mn(2+)</name>
        <dbReference type="ChEBI" id="CHEBI:29035"/>
    </ligand>
</feature>
<feature type="glycosylation site" description="N-linked (GlcNAc...) asparagine" evidence="2">
    <location>
        <position position="52"/>
    </location>
</feature>
<feature type="glycosylation site" description="N-linked (GlcNAc...) asparagine" evidence="2">
    <location>
        <position position="76"/>
    </location>
</feature>
<feature type="disulfide bond" evidence="1">
    <location>
        <begin position="34"/>
        <end position="49"/>
    </location>
</feature>
<name>GL11_ORYSJ</name>
<gene>
    <name type="primary">GER4</name>
    <name type="ordered locus">Os01g0284500</name>
    <name type="ordered locus">LOC_Os01g18170</name>
    <name type="ORF">OsJ_001298</name>
    <name type="ORF">OSJNBa0004B13.19</name>
    <name type="ORF">P0498A12.11</name>
    <name type="ORF">P0581F09.32</name>
</gene>
<reference key="1">
    <citation type="online journal article" date="1998" name="Plant Gene Register">
        <title>The rice genome expresses at least six different genes for oxalate oxidase/germin-like proteins.</title>
        <authorList>
            <person name="Membre N."/>
            <person name="Bernier F."/>
        </authorList>
        <locator>PGR98-021</locator>
    </citation>
    <scope>NUCLEOTIDE SEQUENCE [MRNA]</scope>
    <source>
        <strain>cv. Nipponbare</strain>
    </source>
</reference>
<reference key="2">
    <citation type="journal article" date="2002" name="Nature">
        <title>The genome sequence and structure of rice chromosome 1.</title>
        <authorList>
            <person name="Sasaki T."/>
            <person name="Matsumoto T."/>
            <person name="Yamamoto K."/>
            <person name="Sakata K."/>
            <person name="Baba T."/>
            <person name="Katayose Y."/>
            <person name="Wu J."/>
            <person name="Niimura Y."/>
            <person name="Cheng Z."/>
            <person name="Nagamura Y."/>
            <person name="Antonio B.A."/>
            <person name="Kanamori H."/>
            <person name="Hosokawa S."/>
            <person name="Masukawa M."/>
            <person name="Arikawa K."/>
            <person name="Chiden Y."/>
            <person name="Hayashi M."/>
            <person name="Okamoto M."/>
            <person name="Ando T."/>
            <person name="Aoki H."/>
            <person name="Arita K."/>
            <person name="Hamada M."/>
            <person name="Harada C."/>
            <person name="Hijishita S."/>
            <person name="Honda M."/>
            <person name="Ichikawa Y."/>
            <person name="Idonuma A."/>
            <person name="Iijima M."/>
            <person name="Ikeda M."/>
            <person name="Ikeno M."/>
            <person name="Ito S."/>
            <person name="Ito T."/>
            <person name="Ito Y."/>
            <person name="Ito Y."/>
            <person name="Iwabuchi A."/>
            <person name="Kamiya K."/>
            <person name="Karasawa W."/>
            <person name="Katagiri S."/>
            <person name="Kikuta A."/>
            <person name="Kobayashi N."/>
            <person name="Kono I."/>
            <person name="Machita K."/>
            <person name="Maehara T."/>
            <person name="Mizuno H."/>
            <person name="Mizubayashi T."/>
            <person name="Mukai Y."/>
            <person name="Nagasaki H."/>
            <person name="Nakashima M."/>
            <person name="Nakama Y."/>
            <person name="Nakamichi Y."/>
            <person name="Nakamura M."/>
            <person name="Namiki N."/>
            <person name="Negishi M."/>
            <person name="Ohta I."/>
            <person name="Ono N."/>
            <person name="Saji S."/>
            <person name="Sakai K."/>
            <person name="Shibata M."/>
            <person name="Shimokawa T."/>
            <person name="Shomura A."/>
            <person name="Song J."/>
            <person name="Takazaki Y."/>
            <person name="Terasawa K."/>
            <person name="Tsuji K."/>
            <person name="Waki K."/>
            <person name="Yamagata H."/>
            <person name="Yamane H."/>
            <person name="Yoshiki S."/>
            <person name="Yoshihara R."/>
            <person name="Yukawa K."/>
            <person name="Zhong H."/>
            <person name="Iwama H."/>
            <person name="Endo T."/>
            <person name="Ito H."/>
            <person name="Hahn J.H."/>
            <person name="Kim H.-I."/>
            <person name="Eun M.-Y."/>
            <person name="Yano M."/>
            <person name="Jiang J."/>
            <person name="Gojobori T."/>
        </authorList>
    </citation>
    <scope>NUCLEOTIDE SEQUENCE [LARGE SCALE GENOMIC DNA]</scope>
    <source>
        <strain>cv. Nipponbare</strain>
    </source>
</reference>
<reference key="3">
    <citation type="journal article" date="2005" name="Nature">
        <title>The map-based sequence of the rice genome.</title>
        <authorList>
            <consortium name="International rice genome sequencing project (IRGSP)"/>
        </authorList>
    </citation>
    <scope>NUCLEOTIDE SEQUENCE [LARGE SCALE GENOMIC DNA]</scope>
    <source>
        <strain>cv. Nipponbare</strain>
    </source>
</reference>
<reference key="4">
    <citation type="journal article" date="2008" name="Nucleic Acids Res.">
        <title>The rice annotation project database (RAP-DB): 2008 update.</title>
        <authorList>
            <consortium name="The rice annotation project (RAP)"/>
        </authorList>
    </citation>
    <scope>GENOME REANNOTATION</scope>
    <source>
        <strain>cv. Nipponbare</strain>
    </source>
</reference>
<reference key="5">
    <citation type="journal article" date="2013" name="Rice">
        <title>Improvement of the Oryza sativa Nipponbare reference genome using next generation sequence and optical map data.</title>
        <authorList>
            <person name="Kawahara Y."/>
            <person name="de la Bastide M."/>
            <person name="Hamilton J.P."/>
            <person name="Kanamori H."/>
            <person name="McCombie W.R."/>
            <person name="Ouyang S."/>
            <person name="Schwartz D.C."/>
            <person name="Tanaka T."/>
            <person name="Wu J."/>
            <person name="Zhou S."/>
            <person name="Childs K.L."/>
            <person name="Davidson R.M."/>
            <person name="Lin H."/>
            <person name="Quesada-Ocampo L."/>
            <person name="Vaillancourt B."/>
            <person name="Sakai H."/>
            <person name="Lee S.S."/>
            <person name="Kim J."/>
            <person name="Numa H."/>
            <person name="Itoh T."/>
            <person name="Buell C.R."/>
            <person name="Matsumoto T."/>
        </authorList>
    </citation>
    <scope>GENOME REANNOTATION</scope>
    <source>
        <strain>cv. Nipponbare</strain>
    </source>
</reference>
<reference key="6">
    <citation type="journal article" date="2005" name="PLoS Biol.">
        <title>The genomes of Oryza sativa: a history of duplications.</title>
        <authorList>
            <person name="Yu J."/>
            <person name="Wang J."/>
            <person name="Lin W."/>
            <person name="Li S."/>
            <person name="Li H."/>
            <person name="Zhou J."/>
            <person name="Ni P."/>
            <person name="Dong W."/>
            <person name="Hu S."/>
            <person name="Zeng C."/>
            <person name="Zhang J."/>
            <person name="Zhang Y."/>
            <person name="Li R."/>
            <person name="Xu Z."/>
            <person name="Li S."/>
            <person name="Li X."/>
            <person name="Zheng H."/>
            <person name="Cong L."/>
            <person name="Lin L."/>
            <person name="Yin J."/>
            <person name="Geng J."/>
            <person name="Li G."/>
            <person name="Shi J."/>
            <person name="Liu J."/>
            <person name="Lv H."/>
            <person name="Li J."/>
            <person name="Wang J."/>
            <person name="Deng Y."/>
            <person name="Ran L."/>
            <person name="Shi X."/>
            <person name="Wang X."/>
            <person name="Wu Q."/>
            <person name="Li C."/>
            <person name="Ren X."/>
            <person name="Wang J."/>
            <person name="Wang X."/>
            <person name="Li D."/>
            <person name="Liu D."/>
            <person name="Zhang X."/>
            <person name="Ji Z."/>
            <person name="Zhao W."/>
            <person name="Sun Y."/>
            <person name="Zhang Z."/>
            <person name="Bao J."/>
            <person name="Han Y."/>
            <person name="Dong L."/>
            <person name="Ji J."/>
            <person name="Chen P."/>
            <person name="Wu S."/>
            <person name="Liu J."/>
            <person name="Xiao Y."/>
            <person name="Bu D."/>
            <person name="Tan J."/>
            <person name="Yang L."/>
            <person name="Ye C."/>
            <person name="Zhang J."/>
            <person name="Xu J."/>
            <person name="Zhou Y."/>
            <person name="Yu Y."/>
            <person name="Zhang B."/>
            <person name="Zhuang S."/>
            <person name="Wei H."/>
            <person name="Liu B."/>
            <person name="Lei M."/>
            <person name="Yu H."/>
            <person name="Li Y."/>
            <person name="Xu H."/>
            <person name="Wei S."/>
            <person name="He X."/>
            <person name="Fang L."/>
            <person name="Zhang Z."/>
            <person name="Zhang Y."/>
            <person name="Huang X."/>
            <person name="Su Z."/>
            <person name="Tong W."/>
            <person name="Li J."/>
            <person name="Tong Z."/>
            <person name="Li S."/>
            <person name="Ye J."/>
            <person name="Wang L."/>
            <person name="Fang L."/>
            <person name="Lei T."/>
            <person name="Chen C.-S."/>
            <person name="Chen H.-C."/>
            <person name="Xu Z."/>
            <person name="Li H."/>
            <person name="Huang H."/>
            <person name="Zhang F."/>
            <person name="Xu H."/>
            <person name="Li N."/>
            <person name="Zhao C."/>
            <person name="Li S."/>
            <person name="Dong L."/>
            <person name="Huang Y."/>
            <person name="Li L."/>
            <person name="Xi Y."/>
            <person name="Qi Q."/>
            <person name="Li W."/>
            <person name="Zhang B."/>
            <person name="Hu W."/>
            <person name="Zhang Y."/>
            <person name="Tian X."/>
            <person name="Jiao Y."/>
            <person name="Liang X."/>
            <person name="Jin J."/>
            <person name="Gao L."/>
            <person name="Zheng W."/>
            <person name="Hao B."/>
            <person name="Liu S.-M."/>
            <person name="Wang W."/>
            <person name="Yuan L."/>
            <person name="Cao M."/>
            <person name="McDermott J."/>
            <person name="Samudrala R."/>
            <person name="Wang J."/>
            <person name="Wong G.K.-S."/>
            <person name="Yang H."/>
        </authorList>
    </citation>
    <scope>NUCLEOTIDE SEQUENCE [LARGE SCALE GENOMIC DNA]</scope>
    <source>
        <strain>cv. Nipponbare</strain>
    </source>
</reference>
<reference key="7">
    <citation type="journal article" date="2003" name="Science">
        <title>Collection, mapping, and annotation of over 28,000 cDNA clones from japonica rice.</title>
        <authorList>
            <consortium name="The rice full-length cDNA consortium"/>
        </authorList>
    </citation>
    <scope>NUCLEOTIDE SEQUENCE [LARGE SCALE MRNA]</scope>
    <source>
        <strain>cv. Nipponbare</strain>
    </source>
</reference>
<proteinExistence type="evidence at transcript level"/>
<comment type="function">
    <text>May play a role in plant defense. Probably has no oxalate oxidase activity even if the active site is conserved.</text>
</comment>
<comment type="subunit">
    <text evidence="1">Oligomer (believed to be a pentamer but probably hexamer).</text>
</comment>
<comment type="subcellular location">
    <subcellularLocation>
        <location evidence="1">Secreted</location>
        <location evidence="1">Extracellular space</location>
        <location evidence="1">Apoplast</location>
    </subcellularLocation>
</comment>
<comment type="similarity">
    <text evidence="3">Belongs to the germin family.</text>
</comment>
<evidence type="ECO:0000250" key="1"/>
<evidence type="ECO:0000255" key="2"/>
<evidence type="ECO:0000305" key="3"/>
<dbReference type="EMBL" id="AF032974">
    <property type="protein sequence ID" value="AAC04835.1"/>
    <property type="molecule type" value="mRNA"/>
</dbReference>
<dbReference type="EMBL" id="AP003018">
    <property type="protein sequence ID" value="BAB39965.1"/>
    <property type="molecule type" value="Genomic_DNA"/>
</dbReference>
<dbReference type="EMBL" id="AP003020">
    <property type="protein sequence ID" value="BAB39980.1"/>
    <property type="molecule type" value="Genomic_DNA"/>
</dbReference>
<dbReference type="EMBL" id="AP003631">
    <property type="protein sequence ID" value="BAB64225.1"/>
    <property type="molecule type" value="Genomic_DNA"/>
</dbReference>
<dbReference type="EMBL" id="AP008207">
    <property type="protein sequence ID" value="BAF04684.1"/>
    <property type="molecule type" value="Genomic_DNA"/>
</dbReference>
<dbReference type="EMBL" id="AP014957">
    <property type="protein sequence ID" value="BAS71618.1"/>
    <property type="molecule type" value="Genomic_DNA"/>
</dbReference>
<dbReference type="EMBL" id="CM000138">
    <property type="protein sequence ID" value="EAZ11473.1"/>
    <property type="molecule type" value="Genomic_DNA"/>
</dbReference>
<dbReference type="EMBL" id="AK061164">
    <property type="protein sequence ID" value="BAG87767.1"/>
    <property type="molecule type" value="mRNA"/>
</dbReference>
<dbReference type="PIR" id="T02658">
    <property type="entry name" value="T02658"/>
</dbReference>
<dbReference type="RefSeq" id="XP_015622834.1">
    <property type="nucleotide sequence ID" value="XM_015767348.1"/>
</dbReference>
<dbReference type="SMR" id="Q7F731"/>
<dbReference type="FunCoup" id="Q7F731">
    <property type="interactions" value="37"/>
</dbReference>
<dbReference type="STRING" id="39947.Q7F731"/>
<dbReference type="GlyCosmos" id="Q7F731">
    <property type="glycosylation" value="2 sites, No reported glycans"/>
</dbReference>
<dbReference type="PaxDb" id="39947-Q7F731"/>
<dbReference type="EnsemblPlants" id="Os01t0284500-01">
    <property type="protein sequence ID" value="Os01t0284500-01"/>
    <property type="gene ID" value="Os01g0284500"/>
</dbReference>
<dbReference type="Gramene" id="Os01t0284500-01">
    <property type="protein sequence ID" value="Os01t0284500-01"/>
    <property type="gene ID" value="Os01g0284500"/>
</dbReference>
<dbReference type="KEGG" id="dosa:Os01g0284500"/>
<dbReference type="eggNOG" id="ENOG502QQ4A">
    <property type="taxonomic scope" value="Eukaryota"/>
</dbReference>
<dbReference type="HOGENOM" id="CLU_015790_0_3_1"/>
<dbReference type="InParanoid" id="Q7F731"/>
<dbReference type="OMA" id="GIFFQPC"/>
<dbReference type="OrthoDB" id="1921208at2759"/>
<dbReference type="Proteomes" id="UP000000763">
    <property type="component" value="Chromosome 1"/>
</dbReference>
<dbReference type="Proteomes" id="UP000007752">
    <property type="component" value="Chromosome 1"/>
</dbReference>
<dbReference type="Proteomes" id="UP000059680">
    <property type="component" value="Chromosome 1"/>
</dbReference>
<dbReference type="GO" id="GO:0048046">
    <property type="term" value="C:apoplast"/>
    <property type="evidence" value="ECO:0007669"/>
    <property type="project" value="UniProtKB-SubCell"/>
</dbReference>
<dbReference type="GO" id="GO:0009506">
    <property type="term" value="C:plasmodesma"/>
    <property type="evidence" value="ECO:0000318"/>
    <property type="project" value="GO_Central"/>
</dbReference>
<dbReference type="GO" id="GO:0030145">
    <property type="term" value="F:manganese ion binding"/>
    <property type="evidence" value="ECO:0007669"/>
    <property type="project" value="InterPro"/>
</dbReference>
<dbReference type="GO" id="GO:0010497">
    <property type="term" value="P:plasmodesmata-mediated intercellular transport"/>
    <property type="evidence" value="ECO:0000318"/>
    <property type="project" value="GO_Central"/>
</dbReference>
<dbReference type="GO" id="GO:2000280">
    <property type="term" value="P:regulation of root development"/>
    <property type="evidence" value="ECO:0000318"/>
    <property type="project" value="GO_Central"/>
</dbReference>
<dbReference type="CDD" id="cd02241">
    <property type="entry name" value="cupin_OxOx"/>
    <property type="match status" value="1"/>
</dbReference>
<dbReference type="FunFam" id="2.60.120.10:FF:000025">
    <property type="entry name" value="germin-like protein subfamily 2 member 1"/>
    <property type="match status" value="1"/>
</dbReference>
<dbReference type="Gene3D" id="2.60.120.10">
    <property type="entry name" value="Jelly Rolls"/>
    <property type="match status" value="1"/>
</dbReference>
<dbReference type="InterPro" id="IPR006045">
    <property type="entry name" value="Cupin_1"/>
</dbReference>
<dbReference type="InterPro" id="IPR001929">
    <property type="entry name" value="Germin"/>
</dbReference>
<dbReference type="InterPro" id="IPR019780">
    <property type="entry name" value="Germin_Mn-BS"/>
</dbReference>
<dbReference type="InterPro" id="IPR014710">
    <property type="entry name" value="RmlC-like_jellyroll"/>
</dbReference>
<dbReference type="InterPro" id="IPR011051">
    <property type="entry name" value="RmlC_Cupin_sf"/>
</dbReference>
<dbReference type="PANTHER" id="PTHR31238">
    <property type="entry name" value="GERMIN-LIKE PROTEIN SUBFAMILY 3 MEMBER 3"/>
    <property type="match status" value="1"/>
</dbReference>
<dbReference type="Pfam" id="PF00190">
    <property type="entry name" value="Cupin_1"/>
    <property type="match status" value="1"/>
</dbReference>
<dbReference type="PRINTS" id="PR00325">
    <property type="entry name" value="GERMIN"/>
</dbReference>
<dbReference type="SMART" id="SM00835">
    <property type="entry name" value="Cupin_1"/>
    <property type="match status" value="1"/>
</dbReference>
<dbReference type="SUPFAM" id="SSF51182">
    <property type="entry name" value="RmlC-like cupins"/>
    <property type="match status" value="1"/>
</dbReference>
<dbReference type="PROSITE" id="PS00725">
    <property type="entry name" value="GERMIN"/>
    <property type="match status" value="1"/>
</dbReference>
<sequence length="216" mass="22477">MARVQLWVAAACAVVLALAAPSLAGDPDMLQDVCVADLASPVKLNGFPCKANVTADDFFFAGLKNPGNTNNPAGSNVTAANVQSFPGVNTLGVSMARIDYAPGGQNPPHTHPRATEIIFVLEGVLEVGFITTANKLFTKTVTAGEVFVFPRGLVHFQQNRGHGPAAVIAAFNSQLQGTQAIAATLFAAAPPVPSDVLAKAFRVDVPQVDAIKAKFK</sequence>
<keyword id="KW-0052">Apoplast</keyword>
<keyword id="KW-1015">Disulfide bond</keyword>
<keyword id="KW-0325">Glycoprotein</keyword>
<keyword id="KW-0464">Manganese</keyword>
<keyword id="KW-0479">Metal-binding</keyword>
<keyword id="KW-1185">Reference proteome</keyword>
<keyword id="KW-0964">Secreted</keyword>
<keyword id="KW-0732">Signal</keyword>
<accession>Q7F731</accession>
<accession>A0A0P0V1K0</accession>
<accession>O49000</accession>
<organism>
    <name type="scientific">Oryza sativa subsp. japonica</name>
    <name type="common">Rice</name>
    <dbReference type="NCBI Taxonomy" id="39947"/>
    <lineage>
        <taxon>Eukaryota</taxon>
        <taxon>Viridiplantae</taxon>
        <taxon>Streptophyta</taxon>
        <taxon>Embryophyta</taxon>
        <taxon>Tracheophyta</taxon>
        <taxon>Spermatophyta</taxon>
        <taxon>Magnoliopsida</taxon>
        <taxon>Liliopsida</taxon>
        <taxon>Poales</taxon>
        <taxon>Poaceae</taxon>
        <taxon>BOP clade</taxon>
        <taxon>Oryzoideae</taxon>
        <taxon>Oryzeae</taxon>
        <taxon>Oryzinae</taxon>
        <taxon>Oryza</taxon>
        <taxon>Oryza sativa</taxon>
    </lineage>
</organism>